<sequence length="42" mass="4818">DRDSCVDKSRCAKYGYYQECTDCCKKYGHNGGTCMFFKCKCA</sequence>
<reference key="1">
    <citation type="journal article" date="2002" name="FEBS Lett.">
        <title>A large number of novel Ergtoxin-like genes and ERG K+-channels blocking peptides from scorpions of the genus Centruroides.</title>
        <authorList>
            <person name="Corona M."/>
            <person name="Gurrola G.B."/>
            <person name="Merino E."/>
            <person name="Cassulini R.R."/>
            <person name="Valdez-Cruz N.A."/>
            <person name="Garcia B."/>
            <person name="Ramirez-Dominguez M.E."/>
            <person name="Coronas F.I."/>
            <person name="Zamudio F.Z."/>
            <person name="Wanke E."/>
            <person name="Possani L.D."/>
        </authorList>
    </citation>
    <scope>NUCLEOTIDE SEQUENCE [MRNA]</scope>
    <scope>NOMENCLATURE</scope>
    <source>
        <tissue>Venom gland</tissue>
    </source>
</reference>
<proteinExistence type="inferred from homology"/>
<evidence type="ECO:0000250" key="1"/>
<evidence type="ECO:0000250" key="2">
    <source>
        <dbReference type="UniProtKB" id="Q86QT3"/>
    </source>
</evidence>
<evidence type="ECO:0000303" key="3">
    <source>
    </source>
</evidence>
<evidence type="ECO:0000305" key="4"/>
<organism>
    <name type="scientific">Centruroides elegans</name>
    <name type="common">Bark scorpion</name>
    <dbReference type="NCBI Taxonomy" id="217897"/>
    <lineage>
        <taxon>Eukaryota</taxon>
        <taxon>Metazoa</taxon>
        <taxon>Ecdysozoa</taxon>
        <taxon>Arthropoda</taxon>
        <taxon>Chelicerata</taxon>
        <taxon>Arachnida</taxon>
        <taxon>Scorpiones</taxon>
        <taxon>Buthida</taxon>
        <taxon>Buthoidea</taxon>
        <taxon>Buthidae</taxon>
        <taxon>Centruroides</taxon>
    </lineage>
</organism>
<dbReference type="EMBL" id="AY159337">
    <property type="protein sequence ID" value="AAO22215.1"/>
    <property type="molecule type" value="mRNA"/>
</dbReference>
<dbReference type="SMR" id="Q86QV6"/>
<dbReference type="GO" id="GO:0005576">
    <property type="term" value="C:extracellular region"/>
    <property type="evidence" value="ECO:0007669"/>
    <property type="project" value="UniProtKB-SubCell"/>
</dbReference>
<dbReference type="GO" id="GO:0019870">
    <property type="term" value="F:potassium channel inhibitor activity"/>
    <property type="evidence" value="ECO:0007669"/>
    <property type="project" value="InterPro"/>
</dbReference>
<dbReference type="GO" id="GO:0090729">
    <property type="term" value="F:toxin activity"/>
    <property type="evidence" value="ECO:0007669"/>
    <property type="project" value="UniProtKB-KW"/>
</dbReference>
<dbReference type="Gene3D" id="3.30.30.10">
    <property type="entry name" value="Knottin, scorpion toxin-like"/>
    <property type="match status" value="1"/>
</dbReference>
<dbReference type="InterPro" id="IPR012622">
    <property type="entry name" value="Ergtoxin"/>
</dbReference>
<dbReference type="InterPro" id="IPR036574">
    <property type="entry name" value="Scorpion_toxin-like_sf"/>
</dbReference>
<dbReference type="Pfam" id="PF08086">
    <property type="entry name" value="Toxin_17"/>
    <property type="match status" value="1"/>
</dbReference>
<dbReference type="SUPFAM" id="SSF57095">
    <property type="entry name" value="Scorpion toxin-like"/>
    <property type="match status" value="1"/>
</dbReference>
<dbReference type="PROSITE" id="PS60026">
    <property type="entry name" value="ERGTX"/>
    <property type="match status" value="1"/>
</dbReference>
<name>KGX12_CENEL</name>
<feature type="chain" id="PRO_0000066844" description="Potassium channel toxin gamma-KTx 1.2">
    <location>
        <begin position="1"/>
        <end position="42"/>
    </location>
</feature>
<feature type="disulfide bond" evidence="2">
    <location>
        <begin position="5"/>
        <end position="23"/>
    </location>
</feature>
<feature type="disulfide bond" evidence="2">
    <location>
        <begin position="11"/>
        <end position="34"/>
    </location>
</feature>
<feature type="disulfide bond" evidence="2">
    <location>
        <begin position="20"/>
        <end position="39"/>
    </location>
</feature>
<feature type="disulfide bond" evidence="2">
    <location>
        <begin position="24"/>
        <end position="41"/>
    </location>
</feature>
<accession>Q86QV6</accession>
<comment type="function">
    <text evidence="2">Blocks Kv11/ERG potassium channels.</text>
</comment>
<comment type="subcellular location">
    <subcellularLocation>
        <location evidence="2">Secreted</location>
    </subcellularLocation>
</comment>
<comment type="tissue specificity">
    <text evidence="4">Expressed by the venom gland.</text>
</comment>
<comment type="domain">
    <text evidence="1">The presence of a 'disulfide through disulfide knot' structurally defines this protein as a knottin.</text>
</comment>
<comment type="domain">
    <text evidence="2">Has the CSalpha/beta fold, which comprises one or two short alpha helices connected to anti-parallel beta-sheets stabilized by three or four disulfide bonds.</text>
</comment>
<comment type="similarity">
    <text evidence="4">Belongs to the ergtoxin family. Gamma-KTx 1 subfamily.</text>
</comment>
<keyword id="KW-1015">Disulfide bond</keyword>
<keyword id="KW-0872">Ion channel impairing toxin</keyword>
<keyword id="KW-0960">Knottin</keyword>
<keyword id="KW-0528">Neurotoxin</keyword>
<keyword id="KW-0632">Potassium channel impairing toxin</keyword>
<keyword id="KW-0964">Secreted</keyword>
<keyword id="KW-0800">Toxin</keyword>
<keyword id="KW-1220">Voltage-gated potassium channel impairing toxin</keyword>
<protein>
    <recommendedName>
        <fullName evidence="3">Potassium channel toxin gamma-KTx 1.2</fullName>
    </recommendedName>
    <alternativeName>
        <fullName evidence="4">CeErgTx1</fullName>
        <shortName evidence="3">CeErg1</shortName>
    </alternativeName>
    <alternativeName>
        <fullName evidence="3">Ergtoxin-like protein</fullName>
    </alternativeName>
</protein>